<keyword id="KW-0963">Cytoplasm</keyword>
<keyword id="KW-0489">Methyltransferase</keyword>
<keyword id="KW-1185">Reference proteome</keyword>
<keyword id="KW-0698">rRNA processing</keyword>
<keyword id="KW-0949">S-adenosyl-L-methionine</keyword>
<keyword id="KW-0808">Transferase</keyword>
<reference key="1">
    <citation type="submission" date="2008-04" db="EMBL/GenBank/DDBJ databases">
        <title>Complete sequence of chromosome of Exiguobacterium sibiricum 255-15.</title>
        <authorList>
            <consortium name="US DOE Joint Genome Institute"/>
            <person name="Copeland A."/>
            <person name="Lucas S."/>
            <person name="Lapidus A."/>
            <person name="Glavina del Rio T."/>
            <person name="Dalin E."/>
            <person name="Tice H."/>
            <person name="Bruce D."/>
            <person name="Goodwin L."/>
            <person name="Pitluck S."/>
            <person name="Kiss H."/>
            <person name="Chertkov O."/>
            <person name="Monk C."/>
            <person name="Brettin T."/>
            <person name="Detter J.C."/>
            <person name="Han C."/>
            <person name="Kuske C.R."/>
            <person name="Schmutz J."/>
            <person name="Larimer F."/>
            <person name="Land M."/>
            <person name="Hauser L."/>
            <person name="Kyrpides N."/>
            <person name="Mikhailova N."/>
            <person name="Vishnivetskaya T."/>
            <person name="Rodrigues D.F."/>
            <person name="Gilichinsky D."/>
            <person name="Tiedje J."/>
            <person name="Richardson P."/>
        </authorList>
    </citation>
    <scope>NUCLEOTIDE SEQUENCE [LARGE SCALE GENOMIC DNA]</scope>
    <source>
        <strain>DSM 17290 / CCUG 55495 / CIP 109462 / JCM 13490 / 255-15</strain>
    </source>
</reference>
<comment type="function">
    <text evidence="1">Specifically methylates the pseudouridine at position 1915 (m3Psi1915) in 23S rRNA.</text>
</comment>
<comment type="catalytic activity">
    <reaction evidence="1">
        <text>pseudouridine(1915) in 23S rRNA + S-adenosyl-L-methionine = N(3)-methylpseudouridine(1915) in 23S rRNA + S-adenosyl-L-homocysteine + H(+)</text>
        <dbReference type="Rhea" id="RHEA:42752"/>
        <dbReference type="Rhea" id="RHEA-COMP:10221"/>
        <dbReference type="Rhea" id="RHEA-COMP:10222"/>
        <dbReference type="ChEBI" id="CHEBI:15378"/>
        <dbReference type="ChEBI" id="CHEBI:57856"/>
        <dbReference type="ChEBI" id="CHEBI:59789"/>
        <dbReference type="ChEBI" id="CHEBI:65314"/>
        <dbReference type="ChEBI" id="CHEBI:74486"/>
        <dbReference type="EC" id="2.1.1.177"/>
    </reaction>
</comment>
<comment type="subunit">
    <text evidence="1">Homodimer.</text>
</comment>
<comment type="subcellular location">
    <subcellularLocation>
        <location evidence="1">Cytoplasm</location>
    </subcellularLocation>
</comment>
<comment type="similarity">
    <text evidence="1">Belongs to the RNA methyltransferase RlmH family.</text>
</comment>
<evidence type="ECO:0000255" key="1">
    <source>
        <dbReference type="HAMAP-Rule" id="MF_00658"/>
    </source>
</evidence>
<dbReference type="EC" id="2.1.1.177" evidence="1"/>
<dbReference type="EMBL" id="CP001022">
    <property type="protein sequence ID" value="ACB62469.1"/>
    <property type="molecule type" value="Genomic_DNA"/>
</dbReference>
<dbReference type="RefSeq" id="WP_012371884.1">
    <property type="nucleotide sequence ID" value="NC_010556.1"/>
</dbReference>
<dbReference type="SMR" id="B1YG85"/>
<dbReference type="STRING" id="262543.Exig_3024"/>
<dbReference type="KEGG" id="esi:Exig_3024"/>
<dbReference type="eggNOG" id="COG1576">
    <property type="taxonomic scope" value="Bacteria"/>
</dbReference>
<dbReference type="HOGENOM" id="CLU_100552_0_0_9"/>
<dbReference type="OrthoDB" id="9806643at2"/>
<dbReference type="Proteomes" id="UP000001681">
    <property type="component" value="Chromosome"/>
</dbReference>
<dbReference type="GO" id="GO:0005737">
    <property type="term" value="C:cytoplasm"/>
    <property type="evidence" value="ECO:0007669"/>
    <property type="project" value="UniProtKB-SubCell"/>
</dbReference>
<dbReference type="GO" id="GO:0070038">
    <property type="term" value="F:rRNA (pseudouridine-N3-)-methyltransferase activity"/>
    <property type="evidence" value="ECO:0007669"/>
    <property type="project" value="UniProtKB-UniRule"/>
</dbReference>
<dbReference type="CDD" id="cd18081">
    <property type="entry name" value="RlmH-like"/>
    <property type="match status" value="1"/>
</dbReference>
<dbReference type="Gene3D" id="3.40.1280.10">
    <property type="match status" value="1"/>
</dbReference>
<dbReference type="HAMAP" id="MF_00658">
    <property type="entry name" value="23SrRNA_methyltr_H"/>
    <property type="match status" value="1"/>
</dbReference>
<dbReference type="InterPro" id="IPR029028">
    <property type="entry name" value="Alpha/beta_knot_MTases"/>
</dbReference>
<dbReference type="InterPro" id="IPR003742">
    <property type="entry name" value="RlmH-like"/>
</dbReference>
<dbReference type="InterPro" id="IPR029026">
    <property type="entry name" value="tRNA_m1G_MTases_N"/>
</dbReference>
<dbReference type="NCBIfam" id="NF000985">
    <property type="entry name" value="PRK00103.1-3"/>
    <property type="match status" value="1"/>
</dbReference>
<dbReference type="NCBIfam" id="TIGR00246">
    <property type="entry name" value="tRNA_RlmH_YbeA"/>
    <property type="match status" value="1"/>
</dbReference>
<dbReference type="PANTHER" id="PTHR33603">
    <property type="entry name" value="METHYLTRANSFERASE"/>
    <property type="match status" value="1"/>
</dbReference>
<dbReference type="PANTHER" id="PTHR33603:SF1">
    <property type="entry name" value="RIBOSOMAL RNA LARGE SUBUNIT METHYLTRANSFERASE H"/>
    <property type="match status" value="1"/>
</dbReference>
<dbReference type="Pfam" id="PF02590">
    <property type="entry name" value="SPOUT_MTase"/>
    <property type="match status" value="1"/>
</dbReference>
<dbReference type="PIRSF" id="PIRSF004505">
    <property type="entry name" value="MT_bac"/>
    <property type="match status" value="1"/>
</dbReference>
<dbReference type="SUPFAM" id="SSF75217">
    <property type="entry name" value="alpha/beta knot"/>
    <property type="match status" value="1"/>
</dbReference>
<feature type="chain" id="PRO_0000366596" description="Ribosomal RNA large subunit methyltransferase H">
    <location>
        <begin position="1"/>
        <end position="159"/>
    </location>
</feature>
<feature type="binding site" evidence="1">
    <location>
        <position position="76"/>
    </location>
    <ligand>
        <name>S-adenosyl-L-methionine</name>
        <dbReference type="ChEBI" id="CHEBI:59789"/>
    </ligand>
</feature>
<feature type="binding site" evidence="1">
    <location>
        <position position="108"/>
    </location>
    <ligand>
        <name>S-adenosyl-L-methionine</name>
        <dbReference type="ChEBI" id="CHEBI:59789"/>
    </ligand>
</feature>
<feature type="binding site" evidence="1">
    <location>
        <begin position="127"/>
        <end position="132"/>
    </location>
    <ligand>
        <name>S-adenosyl-L-methionine</name>
        <dbReference type="ChEBI" id="CHEBI:59789"/>
    </ligand>
</feature>
<name>RLMH_EXIS2</name>
<organism>
    <name type="scientific">Exiguobacterium sibiricum (strain DSM 17290 / CCUG 55495 / CIP 109462 / JCM 13490 / 255-15)</name>
    <dbReference type="NCBI Taxonomy" id="262543"/>
    <lineage>
        <taxon>Bacteria</taxon>
        <taxon>Bacillati</taxon>
        <taxon>Bacillota</taxon>
        <taxon>Bacilli</taxon>
        <taxon>Bacillales</taxon>
        <taxon>Bacillales Family XII. Incertae Sedis</taxon>
        <taxon>Exiguobacterium</taxon>
    </lineage>
</organism>
<proteinExistence type="inferred from homology"/>
<sequence length="159" mass="18126">MQITIITVGKLKEKYLKQGIAEYTKRLGAYCSIQEIEVPDEKAPEQLSDAEMQQVKKKEGERILAKIGPDVHVYALAIEGKQRTSEQFATELDRLATYGKSKIAFVIGGSLGLAPEVMQRANDTISFSKMTFPHQLMKMILCEQIYRAYRINRNEPYHK</sequence>
<protein>
    <recommendedName>
        <fullName evidence="1">Ribosomal RNA large subunit methyltransferase H</fullName>
        <ecNumber evidence="1">2.1.1.177</ecNumber>
    </recommendedName>
    <alternativeName>
        <fullName evidence="1">23S rRNA (pseudouridine1915-N3)-methyltransferase</fullName>
    </alternativeName>
    <alternativeName>
        <fullName evidence="1">23S rRNA m3Psi1915 methyltransferase</fullName>
    </alternativeName>
    <alternativeName>
        <fullName evidence="1">rRNA (pseudouridine-N3-)-methyltransferase RlmH</fullName>
    </alternativeName>
</protein>
<accession>B1YG85</accession>
<gene>
    <name evidence="1" type="primary">rlmH</name>
    <name type="ordered locus">Exig_3024</name>
</gene>